<evidence type="ECO:0000250" key="1"/>
<evidence type="ECO:0000250" key="2">
    <source>
        <dbReference type="UniProtKB" id="E4QP00"/>
    </source>
</evidence>
<evidence type="ECO:0000305" key="3"/>
<organism>
    <name type="scientific">Mycobacterium tuberculosis (strain ATCC 25618 / H37Rv)</name>
    <dbReference type="NCBI Taxonomy" id="83332"/>
    <lineage>
        <taxon>Bacteria</taxon>
        <taxon>Bacillati</taxon>
        <taxon>Actinomycetota</taxon>
        <taxon>Actinomycetes</taxon>
        <taxon>Mycobacteriales</taxon>
        <taxon>Mycobacteriaceae</taxon>
        <taxon>Mycobacterium</taxon>
        <taxon>Mycobacterium tuberculosis complex</taxon>
    </lineage>
</organism>
<reference key="1">
    <citation type="journal article" date="1998" name="Nature">
        <title>Deciphering the biology of Mycobacterium tuberculosis from the complete genome sequence.</title>
        <authorList>
            <person name="Cole S.T."/>
            <person name="Brosch R."/>
            <person name="Parkhill J."/>
            <person name="Garnier T."/>
            <person name="Churcher C.M."/>
            <person name="Harris D.E."/>
            <person name="Gordon S.V."/>
            <person name="Eiglmeier K."/>
            <person name="Gas S."/>
            <person name="Barry C.E. III"/>
            <person name="Tekaia F."/>
            <person name="Badcock K."/>
            <person name="Basham D."/>
            <person name="Brown D."/>
            <person name="Chillingworth T."/>
            <person name="Connor R."/>
            <person name="Davies R.M."/>
            <person name="Devlin K."/>
            <person name="Feltwell T."/>
            <person name="Gentles S."/>
            <person name="Hamlin N."/>
            <person name="Holroyd S."/>
            <person name="Hornsby T."/>
            <person name="Jagels K."/>
            <person name="Krogh A."/>
            <person name="McLean J."/>
            <person name="Moule S."/>
            <person name="Murphy L.D."/>
            <person name="Oliver S."/>
            <person name="Osborne J."/>
            <person name="Quail M.A."/>
            <person name="Rajandream M.A."/>
            <person name="Rogers J."/>
            <person name="Rutter S."/>
            <person name="Seeger K."/>
            <person name="Skelton S."/>
            <person name="Squares S."/>
            <person name="Squares R."/>
            <person name="Sulston J.E."/>
            <person name="Taylor K."/>
            <person name="Whitehead S."/>
            <person name="Barrell B.G."/>
        </authorList>
    </citation>
    <scope>NUCLEOTIDE SEQUENCE [LARGE SCALE GENOMIC DNA]</scope>
    <source>
        <strain>ATCC 25618 / H37Rv</strain>
    </source>
</reference>
<reference key="2">
    <citation type="journal article" date="2011" name="Mol. Cell. Proteomics">
        <title>Proteogenomic analysis of Mycobacterium tuberculosis by high resolution mass spectrometry.</title>
        <authorList>
            <person name="Kelkar D.S."/>
            <person name="Kumar D."/>
            <person name="Kumar P."/>
            <person name="Balakrishnan L."/>
            <person name="Muthusamy B."/>
            <person name="Yadav A.K."/>
            <person name="Shrivastava P."/>
            <person name="Marimuthu A."/>
            <person name="Anand S."/>
            <person name="Sundaram H."/>
            <person name="Kingsbury R."/>
            <person name="Harsha H.C."/>
            <person name="Nair B."/>
            <person name="Prasad T.S."/>
            <person name="Chauhan D.S."/>
            <person name="Katoch K."/>
            <person name="Katoch V.M."/>
            <person name="Kumar P."/>
            <person name="Chaerkady R."/>
            <person name="Ramachandran S."/>
            <person name="Dash D."/>
            <person name="Pandey A."/>
        </authorList>
    </citation>
    <scope>IDENTIFICATION BY MASS SPECTROMETRY [LARGE SCALE ANALYSIS]</scope>
    <source>
        <strain>ATCC 25618 / H37Rv</strain>
    </source>
</reference>
<sequence>MSRLADRAKSYPLASFGAALLPPELGGPLPAQFVQRVDRYVTRLPATSRFAVRAGLASLAAASYLTTGRSLPRLHPDERARVLHRIAALSPEVAAAVEGLKAIVLLANGADTYAHELLARAQEHDAARPDAELTVILSADSPSVTRADAVVVGSGAGGAMVARTLARAGLDVVVLEEGRRWTVEEFRSTHPVDRYAGLYRGAGATVALGRPAVVLPMGRAVGGTTVVNSGTCFRPSLAVQRRWRDEFGLGLADPDQLGRRLDDAEQTLRVAPVPLEIMGRNGRLLLQAAKSLGWRAAPIPRNAPGCRGCCQCAIGCPSNAKFGVHLNALPQACAAGARIISWARVERILHRAGRAYGVRARRPDGTTLDVLADAVVVAAGATETPGLLRRSGLGGHPRLGHNLALHPATMLAGLFDDDVFAWRGVLQSAAVHEFHESDGVLIEATSTPPGMGSMVFPGYGAELLRWLDRAPQIATFGAMVADRGVGTVRSVRGETVVRYDIAPGEIAKLRVALQAIGRLLFAAGAVEVLTGIPGAPPMRSLPELQDVLRRANPRSLHLAAFHPTGTAAAGADEQLCPVDATGRLRGVEGVWVADASILPSCPEVNPQLSIMAMALAVADQTVAKVVGVR</sequence>
<accession>P9WMV7</accession>
<accession>L0T3X0</accession>
<accession>Q11157</accession>
<dbReference type="EC" id="1.1.-.-"/>
<dbReference type="EMBL" id="AL123456">
    <property type="protein sequence ID" value="CCP43226.1"/>
    <property type="molecule type" value="Genomic_DNA"/>
</dbReference>
<dbReference type="PIR" id="G70744">
    <property type="entry name" value="G70744"/>
</dbReference>
<dbReference type="RefSeq" id="NP_215006.2">
    <property type="nucleotide sequence ID" value="NC_000962.3"/>
</dbReference>
<dbReference type="RefSeq" id="WP_003908534.1">
    <property type="nucleotide sequence ID" value="NZ_NVQJ01000002.1"/>
</dbReference>
<dbReference type="SMR" id="P9WMV7"/>
<dbReference type="STRING" id="83332.Rv0492c"/>
<dbReference type="PaxDb" id="83332-Rv0492c"/>
<dbReference type="GeneID" id="887199"/>
<dbReference type="KEGG" id="mtu:Rv0492c"/>
<dbReference type="KEGG" id="mtv:RVBD_0492c"/>
<dbReference type="TubercuList" id="Rv0492c"/>
<dbReference type="eggNOG" id="COG2303">
    <property type="taxonomic scope" value="Bacteria"/>
</dbReference>
<dbReference type="InParanoid" id="P9WMV7"/>
<dbReference type="OrthoDB" id="9798604at2"/>
<dbReference type="PhylomeDB" id="P9WMV7"/>
<dbReference type="Proteomes" id="UP000001584">
    <property type="component" value="Chromosome"/>
</dbReference>
<dbReference type="GO" id="GO:0005829">
    <property type="term" value="C:cytosol"/>
    <property type="evidence" value="ECO:0007005"/>
    <property type="project" value="MTBBASE"/>
</dbReference>
<dbReference type="GO" id="GO:0050660">
    <property type="term" value="F:flavin adenine dinucleotide binding"/>
    <property type="evidence" value="ECO:0007669"/>
    <property type="project" value="InterPro"/>
</dbReference>
<dbReference type="GO" id="GO:0016614">
    <property type="term" value="F:oxidoreductase activity, acting on CH-OH group of donors"/>
    <property type="evidence" value="ECO:0007669"/>
    <property type="project" value="InterPro"/>
</dbReference>
<dbReference type="Gene3D" id="3.50.50.60">
    <property type="entry name" value="FAD/NAD(P)-binding domain"/>
    <property type="match status" value="2"/>
</dbReference>
<dbReference type="InterPro" id="IPR036188">
    <property type="entry name" value="FAD/NAD-bd_sf"/>
</dbReference>
<dbReference type="InterPro" id="IPR000172">
    <property type="entry name" value="GMC_OxRdtase_N"/>
</dbReference>
<dbReference type="InterPro" id="IPR007867">
    <property type="entry name" value="GMC_OxRtase_C"/>
</dbReference>
<dbReference type="PANTHER" id="PTHR46056">
    <property type="entry name" value="LONG-CHAIN-ALCOHOL OXIDASE"/>
    <property type="match status" value="1"/>
</dbReference>
<dbReference type="PANTHER" id="PTHR46056:SF12">
    <property type="entry name" value="LONG-CHAIN-ALCOHOL OXIDASE"/>
    <property type="match status" value="1"/>
</dbReference>
<dbReference type="Pfam" id="PF05199">
    <property type="entry name" value="GMC_oxred_C"/>
    <property type="match status" value="1"/>
</dbReference>
<dbReference type="Pfam" id="PF00732">
    <property type="entry name" value="GMC_oxred_N"/>
    <property type="match status" value="1"/>
</dbReference>
<dbReference type="Pfam" id="PF13450">
    <property type="entry name" value="NAD_binding_8"/>
    <property type="match status" value="1"/>
</dbReference>
<dbReference type="SUPFAM" id="SSF51905">
    <property type="entry name" value="FAD/NAD(P)-binding domain"/>
    <property type="match status" value="1"/>
</dbReference>
<dbReference type="PROSITE" id="PS00624">
    <property type="entry name" value="GMC_OXRED_2"/>
    <property type="match status" value="1"/>
</dbReference>
<gene>
    <name type="ordered locus">Rv0492c</name>
    <name type="ORF">MTCY20G9.18c</name>
</gene>
<keyword id="KW-0274">FAD</keyword>
<keyword id="KW-0285">Flavoprotein</keyword>
<keyword id="KW-0560">Oxidoreductase</keyword>
<keyword id="KW-1185">Reference proteome</keyword>
<feature type="chain" id="PRO_0000205615" description="Uncharacterized GMC-type oxidoreductase Rv0492c">
    <location>
        <begin position="1"/>
        <end position="629"/>
    </location>
</feature>
<feature type="active site" description="Proton acceptor" evidence="2">
    <location>
        <position position="562"/>
    </location>
</feature>
<comment type="cofactor">
    <cofactor evidence="1">
        <name>FAD</name>
        <dbReference type="ChEBI" id="CHEBI:57692"/>
    </cofactor>
</comment>
<comment type="similarity">
    <text evidence="3">Belongs to the GMC oxidoreductase family.</text>
</comment>
<protein>
    <recommendedName>
        <fullName>Uncharacterized GMC-type oxidoreductase Rv0492c</fullName>
        <ecNumber>1.1.-.-</ecNumber>
    </recommendedName>
</protein>
<name>Y492_MYCTU</name>
<proteinExistence type="evidence at protein level"/>